<dbReference type="EMBL" id="U19028">
    <property type="protein sequence ID" value="AAB67254.1"/>
    <property type="molecule type" value="Genomic_DNA"/>
</dbReference>
<dbReference type="EMBL" id="BK006945">
    <property type="protein sequence ID" value="DAA09649.1"/>
    <property type="molecule type" value="Genomic_DNA"/>
</dbReference>
<dbReference type="PIR" id="S51347">
    <property type="entry name" value="S51347"/>
</dbReference>
<dbReference type="RefSeq" id="NP_013448.1">
    <property type="nucleotide sequence ID" value="NM_001182233.1"/>
</dbReference>
<dbReference type="PDB" id="2WW9">
    <property type="method" value="EM"/>
    <property type="resolution" value="8.60 A"/>
    <property type="chains" value="L=1-127"/>
</dbReference>
<dbReference type="PDB" id="2WWA">
    <property type="method" value="EM"/>
    <property type="resolution" value="8.90 A"/>
    <property type="chains" value="L=1-127"/>
</dbReference>
<dbReference type="PDB" id="2WWB">
    <property type="method" value="EM"/>
    <property type="resolution" value="6.48 A"/>
    <property type="chains" value="L=1-127"/>
</dbReference>
<dbReference type="PDB" id="3J6X">
    <property type="method" value="EM"/>
    <property type="resolution" value="6.10 A"/>
    <property type="chains" value="66=1-127"/>
</dbReference>
<dbReference type="PDB" id="3J6Y">
    <property type="method" value="EM"/>
    <property type="resolution" value="6.10 A"/>
    <property type="chains" value="66=1-127"/>
</dbReference>
<dbReference type="PDB" id="3J77">
    <property type="method" value="EM"/>
    <property type="resolution" value="6.20 A"/>
    <property type="chains" value="76=1-127"/>
</dbReference>
<dbReference type="PDB" id="3J78">
    <property type="method" value="EM"/>
    <property type="resolution" value="6.30 A"/>
    <property type="chains" value="76=1-127"/>
</dbReference>
<dbReference type="PDB" id="3JCT">
    <property type="method" value="EM"/>
    <property type="resolution" value="3.08 A"/>
    <property type="chains" value="Y=1-127"/>
</dbReference>
<dbReference type="PDB" id="4U3M">
    <property type="method" value="X-ray"/>
    <property type="resolution" value="3.00 A"/>
    <property type="chains" value="N6/n6=2-127"/>
</dbReference>
<dbReference type="PDB" id="4U3N">
    <property type="method" value="X-ray"/>
    <property type="resolution" value="3.20 A"/>
    <property type="chains" value="N6/n6=2-127"/>
</dbReference>
<dbReference type="PDB" id="4U3U">
    <property type="method" value="X-ray"/>
    <property type="resolution" value="2.90 A"/>
    <property type="chains" value="N6/n6=2-127"/>
</dbReference>
<dbReference type="PDB" id="4U4N">
    <property type="method" value="X-ray"/>
    <property type="resolution" value="3.10 A"/>
    <property type="chains" value="N6/n6=2-127"/>
</dbReference>
<dbReference type="PDB" id="4U4O">
    <property type="method" value="X-ray"/>
    <property type="resolution" value="3.60 A"/>
    <property type="chains" value="N6/n6=2-127"/>
</dbReference>
<dbReference type="PDB" id="4U4Q">
    <property type="method" value="X-ray"/>
    <property type="resolution" value="3.00 A"/>
    <property type="chains" value="N6/n6=2-127"/>
</dbReference>
<dbReference type="PDB" id="4U4R">
    <property type="method" value="X-ray"/>
    <property type="resolution" value="2.80 A"/>
    <property type="chains" value="N6/n6=2-127"/>
</dbReference>
<dbReference type="PDB" id="4U4U">
    <property type="method" value="X-ray"/>
    <property type="resolution" value="3.00 A"/>
    <property type="chains" value="N6/n6=2-127"/>
</dbReference>
<dbReference type="PDB" id="4U4Y">
    <property type="method" value="X-ray"/>
    <property type="resolution" value="3.20 A"/>
    <property type="chains" value="N6/n6=2-127"/>
</dbReference>
<dbReference type="PDB" id="4U4Z">
    <property type="method" value="X-ray"/>
    <property type="resolution" value="3.10 A"/>
    <property type="chains" value="N6/n6=2-127"/>
</dbReference>
<dbReference type="PDB" id="4U50">
    <property type="method" value="X-ray"/>
    <property type="resolution" value="3.20 A"/>
    <property type="chains" value="N6/n6=2-127"/>
</dbReference>
<dbReference type="PDB" id="4U51">
    <property type="method" value="X-ray"/>
    <property type="resolution" value="3.20 A"/>
    <property type="chains" value="N6/n6=2-127"/>
</dbReference>
<dbReference type="PDB" id="4U52">
    <property type="method" value="X-ray"/>
    <property type="resolution" value="3.00 A"/>
    <property type="chains" value="N6/n6=2-127"/>
</dbReference>
<dbReference type="PDB" id="4U53">
    <property type="method" value="X-ray"/>
    <property type="resolution" value="3.30 A"/>
    <property type="chains" value="N6/n6=2-127"/>
</dbReference>
<dbReference type="PDB" id="4U55">
    <property type="method" value="X-ray"/>
    <property type="resolution" value="3.20 A"/>
    <property type="chains" value="N6/n6=2-127"/>
</dbReference>
<dbReference type="PDB" id="4U56">
    <property type="method" value="X-ray"/>
    <property type="resolution" value="3.45 A"/>
    <property type="chains" value="N6/n6=2-127"/>
</dbReference>
<dbReference type="PDB" id="4U6F">
    <property type="method" value="X-ray"/>
    <property type="resolution" value="3.10 A"/>
    <property type="chains" value="N6/n6=2-127"/>
</dbReference>
<dbReference type="PDB" id="4V4B">
    <property type="method" value="EM"/>
    <property type="resolution" value="11.70 A"/>
    <property type="chains" value="BU=2-127"/>
</dbReference>
<dbReference type="PDB" id="4V5Z">
    <property type="method" value="EM"/>
    <property type="resolution" value="8.70 A"/>
    <property type="chains" value="Bt=8-122"/>
</dbReference>
<dbReference type="PDB" id="4V6I">
    <property type="method" value="EM"/>
    <property type="resolution" value="8.80 A"/>
    <property type="chains" value="BY=1-123"/>
</dbReference>
<dbReference type="PDB" id="4V7F">
    <property type="method" value="EM"/>
    <property type="resolution" value="8.70 A"/>
    <property type="chains" value="X=1-127"/>
</dbReference>
<dbReference type="PDB" id="4V7R">
    <property type="method" value="X-ray"/>
    <property type="resolution" value="4.00 A"/>
    <property type="chains" value="BX/DX=1-127"/>
</dbReference>
<dbReference type="PDB" id="4V88">
    <property type="method" value="X-ray"/>
    <property type="resolution" value="3.00 A"/>
    <property type="chains" value="BY/DY=1-127"/>
</dbReference>
<dbReference type="PDB" id="4V8T">
    <property type="method" value="EM"/>
    <property type="resolution" value="8.10 A"/>
    <property type="chains" value="Y=1-127"/>
</dbReference>
<dbReference type="PDB" id="4V8Y">
    <property type="method" value="EM"/>
    <property type="resolution" value="4.30 A"/>
    <property type="chains" value="BY=2-127"/>
</dbReference>
<dbReference type="PDB" id="4V8Z">
    <property type="method" value="EM"/>
    <property type="resolution" value="6.60 A"/>
    <property type="chains" value="BY=2-127"/>
</dbReference>
<dbReference type="PDB" id="4V91">
    <property type="method" value="EM"/>
    <property type="resolution" value="3.70 A"/>
    <property type="chains" value="Y=1-127"/>
</dbReference>
<dbReference type="PDB" id="5APN">
    <property type="method" value="EM"/>
    <property type="resolution" value="3.91 A"/>
    <property type="chains" value="Y=1-127"/>
</dbReference>
<dbReference type="PDB" id="5APO">
    <property type="method" value="EM"/>
    <property type="resolution" value="3.41 A"/>
    <property type="chains" value="Y=1-127"/>
</dbReference>
<dbReference type="PDB" id="5DAT">
    <property type="method" value="X-ray"/>
    <property type="resolution" value="3.15 A"/>
    <property type="chains" value="N6/n6=2-127"/>
</dbReference>
<dbReference type="PDB" id="5DC3">
    <property type="method" value="X-ray"/>
    <property type="resolution" value="3.25 A"/>
    <property type="chains" value="N6/n6=2-127"/>
</dbReference>
<dbReference type="PDB" id="5DGE">
    <property type="method" value="X-ray"/>
    <property type="resolution" value="3.45 A"/>
    <property type="chains" value="N6/n6=2-127"/>
</dbReference>
<dbReference type="PDB" id="5DGF">
    <property type="method" value="X-ray"/>
    <property type="resolution" value="3.30 A"/>
    <property type="chains" value="N6/n6=2-127"/>
</dbReference>
<dbReference type="PDB" id="5DGV">
    <property type="method" value="X-ray"/>
    <property type="resolution" value="3.10 A"/>
    <property type="chains" value="N6/n6=2-127"/>
</dbReference>
<dbReference type="PDB" id="5FCI">
    <property type="method" value="X-ray"/>
    <property type="resolution" value="3.40 A"/>
    <property type="chains" value="N6/n6=2-127"/>
</dbReference>
<dbReference type="PDB" id="5FCJ">
    <property type="method" value="X-ray"/>
    <property type="resolution" value="3.10 A"/>
    <property type="chains" value="N6/n6=2-127"/>
</dbReference>
<dbReference type="PDB" id="5GAK">
    <property type="method" value="EM"/>
    <property type="resolution" value="3.88 A"/>
    <property type="chains" value="a=1-127"/>
</dbReference>
<dbReference type="PDB" id="5H4P">
    <property type="method" value="EM"/>
    <property type="resolution" value="3.07 A"/>
    <property type="chains" value="Y=1-127"/>
</dbReference>
<dbReference type="PDB" id="5I4L">
    <property type="method" value="X-ray"/>
    <property type="resolution" value="3.10 A"/>
    <property type="chains" value="N6/n6=2-127"/>
</dbReference>
<dbReference type="PDB" id="5JCS">
    <property type="method" value="EM"/>
    <property type="resolution" value="9.50 A"/>
    <property type="chains" value="Y=1-127"/>
</dbReference>
<dbReference type="PDB" id="5JUO">
    <property type="method" value="EM"/>
    <property type="resolution" value="4.00 A"/>
    <property type="chains" value="DA=1-127"/>
</dbReference>
<dbReference type="PDB" id="5JUP">
    <property type="method" value="EM"/>
    <property type="resolution" value="3.50 A"/>
    <property type="chains" value="DA=1-127"/>
</dbReference>
<dbReference type="PDB" id="5JUS">
    <property type="method" value="EM"/>
    <property type="resolution" value="4.20 A"/>
    <property type="chains" value="DA=1-127"/>
</dbReference>
<dbReference type="PDB" id="5JUT">
    <property type="method" value="EM"/>
    <property type="resolution" value="4.00 A"/>
    <property type="chains" value="DA=1-127"/>
</dbReference>
<dbReference type="PDB" id="5JUU">
    <property type="method" value="EM"/>
    <property type="resolution" value="4.00 A"/>
    <property type="chains" value="DA=1-127"/>
</dbReference>
<dbReference type="PDB" id="5LYB">
    <property type="method" value="X-ray"/>
    <property type="resolution" value="3.25 A"/>
    <property type="chains" value="N6/n6=2-127"/>
</dbReference>
<dbReference type="PDB" id="5M1J">
    <property type="method" value="EM"/>
    <property type="resolution" value="3.30 A"/>
    <property type="chains" value="Y5=2-127"/>
</dbReference>
<dbReference type="PDB" id="5MC6">
    <property type="method" value="EM"/>
    <property type="resolution" value="3.80 A"/>
    <property type="chains" value="AK=1-127"/>
</dbReference>
<dbReference type="PDB" id="5MEI">
    <property type="method" value="X-ray"/>
    <property type="resolution" value="3.50 A"/>
    <property type="chains" value="9/DA=2-127"/>
</dbReference>
<dbReference type="PDB" id="5NDG">
    <property type="method" value="X-ray"/>
    <property type="resolution" value="3.70 A"/>
    <property type="chains" value="N6/n6=2-127"/>
</dbReference>
<dbReference type="PDB" id="5NDV">
    <property type="method" value="X-ray"/>
    <property type="resolution" value="3.30 A"/>
    <property type="chains" value="N6/n6=2-126"/>
</dbReference>
<dbReference type="PDB" id="5NDW">
    <property type="method" value="X-ray"/>
    <property type="resolution" value="3.70 A"/>
    <property type="chains" value="N6/n6=2-127"/>
</dbReference>
<dbReference type="PDB" id="5OBM">
    <property type="method" value="X-ray"/>
    <property type="resolution" value="3.40 A"/>
    <property type="chains" value="N6/n6=2-127"/>
</dbReference>
<dbReference type="PDB" id="5ON6">
    <property type="method" value="X-ray"/>
    <property type="resolution" value="3.10 A"/>
    <property type="chains" value="9/DA=2-127"/>
</dbReference>
<dbReference type="PDB" id="5T62">
    <property type="method" value="EM"/>
    <property type="resolution" value="3.30 A"/>
    <property type="chains" value="l=1-127"/>
</dbReference>
<dbReference type="PDB" id="5T6R">
    <property type="method" value="EM"/>
    <property type="resolution" value="4.50 A"/>
    <property type="chains" value="l=1-127"/>
</dbReference>
<dbReference type="PDB" id="5TBW">
    <property type="method" value="X-ray"/>
    <property type="resolution" value="3.00 A"/>
    <property type="chains" value="9/DA=2-127"/>
</dbReference>
<dbReference type="PDB" id="5TGA">
    <property type="method" value="X-ray"/>
    <property type="resolution" value="3.30 A"/>
    <property type="chains" value="N6/n6=2-127"/>
</dbReference>
<dbReference type="PDB" id="5TGM">
    <property type="method" value="X-ray"/>
    <property type="resolution" value="3.50 A"/>
    <property type="chains" value="N6/n6=2-127"/>
</dbReference>
<dbReference type="PDB" id="5Z3G">
    <property type="method" value="EM"/>
    <property type="resolution" value="3.65 A"/>
    <property type="chains" value="c=1-127"/>
</dbReference>
<dbReference type="PDB" id="6C0F">
    <property type="method" value="EM"/>
    <property type="resolution" value="3.70 A"/>
    <property type="chains" value="Y=1-127"/>
</dbReference>
<dbReference type="PDB" id="6CB1">
    <property type="method" value="EM"/>
    <property type="resolution" value="4.60 A"/>
    <property type="chains" value="Y=1-127"/>
</dbReference>
<dbReference type="PDB" id="6ELZ">
    <property type="method" value="EM"/>
    <property type="resolution" value="3.30 A"/>
    <property type="chains" value="Y=1-127"/>
</dbReference>
<dbReference type="PDB" id="6EM1">
    <property type="method" value="EM"/>
    <property type="resolution" value="3.60 A"/>
    <property type="chains" value="Y=1-127"/>
</dbReference>
<dbReference type="PDB" id="6EM3">
    <property type="method" value="EM"/>
    <property type="resolution" value="3.20 A"/>
    <property type="chains" value="Y=1-127"/>
</dbReference>
<dbReference type="PDB" id="6EM4">
    <property type="method" value="EM"/>
    <property type="resolution" value="4.10 A"/>
    <property type="chains" value="Y=1-127"/>
</dbReference>
<dbReference type="PDB" id="6EM5">
    <property type="method" value="EM"/>
    <property type="resolution" value="4.30 A"/>
    <property type="chains" value="Y=1-127"/>
</dbReference>
<dbReference type="PDB" id="6FT6">
    <property type="method" value="EM"/>
    <property type="resolution" value="3.90 A"/>
    <property type="chains" value="Y=1-127"/>
</dbReference>
<dbReference type="PDB" id="6GQ1">
    <property type="method" value="EM"/>
    <property type="resolution" value="4.40 A"/>
    <property type="chains" value="Y=2-127"/>
</dbReference>
<dbReference type="PDB" id="6GQB">
    <property type="method" value="EM"/>
    <property type="resolution" value="3.90 A"/>
    <property type="chains" value="Y=2-127"/>
</dbReference>
<dbReference type="PDB" id="6GQV">
    <property type="method" value="EM"/>
    <property type="resolution" value="4.00 A"/>
    <property type="chains" value="Y=2-127"/>
</dbReference>
<dbReference type="PDB" id="6HD7">
    <property type="method" value="EM"/>
    <property type="resolution" value="3.40 A"/>
    <property type="chains" value="a=1-127"/>
</dbReference>
<dbReference type="PDB" id="6HHQ">
    <property type="method" value="X-ray"/>
    <property type="resolution" value="3.10 A"/>
    <property type="chains" value="9/DA=1-127"/>
</dbReference>
<dbReference type="PDB" id="6I7O">
    <property type="method" value="EM"/>
    <property type="resolution" value="5.30 A"/>
    <property type="chains" value="AK/XK=2-125"/>
</dbReference>
<dbReference type="PDB" id="6M62">
    <property type="method" value="EM"/>
    <property type="resolution" value="3.20 A"/>
    <property type="chains" value="Y=1-127"/>
</dbReference>
<dbReference type="PDB" id="6N8J">
    <property type="method" value="EM"/>
    <property type="resolution" value="3.50 A"/>
    <property type="chains" value="Y=1-127"/>
</dbReference>
<dbReference type="PDB" id="6N8K">
    <property type="method" value="EM"/>
    <property type="resolution" value="3.60 A"/>
    <property type="chains" value="Y=1-127"/>
</dbReference>
<dbReference type="PDB" id="6N8L">
    <property type="method" value="EM"/>
    <property type="resolution" value="3.60 A"/>
    <property type="chains" value="Y=1-127"/>
</dbReference>
<dbReference type="PDB" id="6N8M">
    <property type="method" value="EM"/>
    <property type="resolution" value="3.50 A"/>
    <property type="chains" value="l=1-127"/>
</dbReference>
<dbReference type="PDB" id="6N8N">
    <property type="method" value="EM"/>
    <property type="resolution" value="3.80 A"/>
    <property type="chains" value="l=1-127"/>
</dbReference>
<dbReference type="PDB" id="6N8O">
    <property type="method" value="EM"/>
    <property type="resolution" value="3.50 A"/>
    <property type="chains" value="l=1-127"/>
</dbReference>
<dbReference type="PDB" id="6OIG">
    <property type="method" value="EM"/>
    <property type="resolution" value="3.80 A"/>
    <property type="chains" value="Y=2-127"/>
</dbReference>
<dbReference type="PDB" id="6Q8Y">
    <property type="method" value="EM"/>
    <property type="resolution" value="3.10 A"/>
    <property type="chains" value="AK=2-127"/>
</dbReference>
<dbReference type="PDB" id="6QIK">
    <property type="method" value="EM"/>
    <property type="resolution" value="3.10 A"/>
    <property type="chains" value="X=1-127"/>
</dbReference>
<dbReference type="PDB" id="6QT0">
    <property type="method" value="EM"/>
    <property type="resolution" value="3.40 A"/>
    <property type="chains" value="X=1-127"/>
</dbReference>
<dbReference type="PDB" id="6QTZ">
    <property type="method" value="EM"/>
    <property type="resolution" value="3.50 A"/>
    <property type="chains" value="X=1-127"/>
</dbReference>
<dbReference type="PDB" id="6R84">
    <property type="method" value="EM"/>
    <property type="resolution" value="3.60 A"/>
    <property type="chains" value="a=2-127"/>
</dbReference>
<dbReference type="PDB" id="6R86">
    <property type="method" value="EM"/>
    <property type="resolution" value="3.40 A"/>
    <property type="chains" value="a=2-127"/>
</dbReference>
<dbReference type="PDB" id="6R87">
    <property type="method" value="EM"/>
    <property type="resolution" value="3.40 A"/>
    <property type="chains" value="a=2-127"/>
</dbReference>
<dbReference type="PDB" id="6RI5">
    <property type="method" value="EM"/>
    <property type="resolution" value="3.30 A"/>
    <property type="chains" value="X=1-127"/>
</dbReference>
<dbReference type="PDB" id="6RZZ">
    <property type="method" value="EM"/>
    <property type="resolution" value="3.20 A"/>
    <property type="chains" value="X=1-127"/>
</dbReference>
<dbReference type="PDB" id="6S05">
    <property type="method" value="EM"/>
    <property type="resolution" value="3.90 A"/>
    <property type="chains" value="X=1-127"/>
</dbReference>
<dbReference type="PDB" id="6S47">
    <property type="method" value="EM"/>
    <property type="resolution" value="3.28 A"/>
    <property type="chains" value="Aa=2-127"/>
</dbReference>
<dbReference type="PDB" id="6SNT">
    <property type="method" value="EM"/>
    <property type="resolution" value="2.80 A"/>
    <property type="chains" value="ar=1-127"/>
</dbReference>
<dbReference type="PDB" id="6SV4">
    <property type="method" value="EM"/>
    <property type="resolution" value="3.30 A"/>
    <property type="chains" value="AK/XK/zK=1-127"/>
</dbReference>
<dbReference type="PDB" id="6T4Q">
    <property type="method" value="EM"/>
    <property type="resolution" value="2.60 A"/>
    <property type="chains" value="LY=2-126"/>
</dbReference>
<dbReference type="PDB" id="6T7I">
    <property type="method" value="EM"/>
    <property type="resolution" value="3.20 A"/>
    <property type="chains" value="LY=1-127"/>
</dbReference>
<dbReference type="PDB" id="6T7T">
    <property type="method" value="EM"/>
    <property type="resolution" value="3.10 A"/>
    <property type="chains" value="LY=1-127"/>
</dbReference>
<dbReference type="PDB" id="6T83">
    <property type="method" value="EM"/>
    <property type="resolution" value="4.00 A"/>
    <property type="chains" value="J/Yy=1-127"/>
</dbReference>
<dbReference type="PDB" id="6TB3">
    <property type="method" value="EM"/>
    <property type="resolution" value="2.80 A"/>
    <property type="chains" value="AK=2-126"/>
</dbReference>
<dbReference type="PDB" id="6TNU">
    <property type="method" value="EM"/>
    <property type="resolution" value="3.10 A"/>
    <property type="chains" value="AK=2-126"/>
</dbReference>
<dbReference type="PDB" id="6WOO">
    <property type="method" value="EM"/>
    <property type="resolution" value="2.90 A"/>
    <property type="chains" value="Y=3-127"/>
</dbReference>
<dbReference type="PDB" id="6XIQ">
    <property type="method" value="EM"/>
    <property type="resolution" value="4.20 A"/>
    <property type="chains" value="Y=1-127"/>
</dbReference>
<dbReference type="PDB" id="6XIR">
    <property type="method" value="EM"/>
    <property type="resolution" value="3.20 A"/>
    <property type="chains" value="Y=1-127"/>
</dbReference>
<dbReference type="PDB" id="6YLG">
    <property type="method" value="EM"/>
    <property type="resolution" value="3.00 A"/>
    <property type="chains" value="Y=1-127"/>
</dbReference>
<dbReference type="PDB" id="6YLH">
    <property type="method" value="EM"/>
    <property type="resolution" value="3.10 A"/>
    <property type="chains" value="Y=1-127"/>
</dbReference>
<dbReference type="PDB" id="6YLX">
    <property type="method" value="EM"/>
    <property type="resolution" value="3.90 A"/>
    <property type="chains" value="Y=1-127"/>
</dbReference>
<dbReference type="PDB" id="6YLY">
    <property type="method" value="EM"/>
    <property type="resolution" value="3.80 A"/>
    <property type="chains" value="Y=1-127"/>
</dbReference>
<dbReference type="PDB" id="6Z6J">
    <property type="method" value="EM"/>
    <property type="resolution" value="3.40 A"/>
    <property type="chains" value="LY=1-127"/>
</dbReference>
<dbReference type="PDB" id="6Z6K">
    <property type="method" value="EM"/>
    <property type="resolution" value="3.40 A"/>
    <property type="chains" value="LY=1-127"/>
</dbReference>
<dbReference type="PDB" id="7AZY">
    <property type="method" value="EM"/>
    <property type="resolution" value="2.88 A"/>
    <property type="chains" value="q=1-127"/>
</dbReference>
<dbReference type="PDB" id="7B7D">
    <property type="method" value="EM"/>
    <property type="resolution" value="3.30 A"/>
    <property type="chains" value="LU=2-126"/>
</dbReference>
<dbReference type="PDB" id="7BT6">
    <property type="method" value="EM"/>
    <property type="resolution" value="3.12 A"/>
    <property type="chains" value="Y=1-127"/>
</dbReference>
<dbReference type="PDB" id="7BTB">
    <property type="method" value="EM"/>
    <property type="resolution" value="3.22 A"/>
    <property type="chains" value="Y=1-127"/>
</dbReference>
<dbReference type="PDB" id="7MPI">
    <property type="method" value="EM"/>
    <property type="resolution" value="3.05 A"/>
    <property type="chains" value="AY=2-127"/>
</dbReference>
<dbReference type="PDB" id="7MPJ">
    <property type="method" value="EM"/>
    <property type="resolution" value="2.70 A"/>
    <property type="chains" value="AY=2-127"/>
</dbReference>
<dbReference type="PDB" id="7N8B">
    <property type="method" value="EM"/>
    <property type="resolution" value="3.05 A"/>
    <property type="chains" value="AY=2-127"/>
</dbReference>
<dbReference type="PDB" id="7NAC">
    <property type="method" value="EM"/>
    <property type="resolution" value="3.04 A"/>
    <property type="chains" value="Y=1-127"/>
</dbReference>
<dbReference type="PDB" id="7NRC">
    <property type="method" value="EM"/>
    <property type="resolution" value="3.90 A"/>
    <property type="chains" value="La=2-126"/>
</dbReference>
<dbReference type="PDB" id="7NRD">
    <property type="method" value="EM"/>
    <property type="resolution" value="4.36 A"/>
    <property type="chains" value="La=2-126"/>
</dbReference>
<dbReference type="PDB" id="7OF1">
    <property type="method" value="EM"/>
    <property type="resolution" value="3.10 A"/>
    <property type="chains" value="Y=1-127"/>
</dbReference>
<dbReference type="PDB" id="7OH3">
    <property type="method" value="EM"/>
    <property type="resolution" value="3.40 A"/>
    <property type="chains" value="Y=1-127"/>
</dbReference>
<dbReference type="PDB" id="7OHP">
    <property type="method" value="EM"/>
    <property type="resolution" value="3.90 A"/>
    <property type="chains" value="Y=1-127"/>
</dbReference>
<dbReference type="PDB" id="7OHQ">
    <property type="method" value="EM"/>
    <property type="resolution" value="3.10 A"/>
    <property type="chains" value="Y=1-127"/>
</dbReference>
<dbReference type="PDB" id="7OHR">
    <property type="method" value="EM"/>
    <property type="resolution" value="4.72 A"/>
    <property type="chains" value="Y=1-127"/>
</dbReference>
<dbReference type="PDB" id="7OHS">
    <property type="method" value="EM"/>
    <property type="resolution" value="4.38 A"/>
    <property type="chains" value="Y=1-127"/>
</dbReference>
<dbReference type="PDB" id="7OHU">
    <property type="method" value="EM"/>
    <property type="resolution" value="3.70 A"/>
    <property type="chains" value="Y=1-127"/>
</dbReference>
<dbReference type="PDB" id="7OHV">
    <property type="method" value="EM"/>
    <property type="resolution" value="3.90 A"/>
    <property type="chains" value="Y=1-127"/>
</dbReference>
<dbReference type="PDB" id="7OHW">
    <property type="method" value="EM"/>
    <property type="resolution" value="3.50 A"/>
    <property type="chains" value="Y=1-127"/>
</dbReference>
<dbReference type="PDB" id="7OHX">
    <property type="method" value="EM"/>
    <property type="resolution" value="3.30 A"/>
    <property type="chains" value="Y=1-127"/>
</dbReference>
<dbReference type="PDB" id="7OHY">
    <property type="method" value="EM"/>
    <property type="resolution" value="3.90 A"/>
    <property type="chains" value="Y=1-127"/>
</dbReference>
<dbReference type="PDB" id="7OSA">
    <property type="method" value="X-ray"/>
    <property type="resolution" value="3.00 A"/>
    <property type="chains" value="uL24=1-127"/>
</dbReference>
<dbReference type="PDB" id="7OSM">
    <property type="method" value="X-ray"/>
    <property type="resolution" value="3.00 A"/>
    <property type="chains" value="uL24=1-127"/>
</dbReference>
<dbReference type="PDB" id="7R7A">
    <property type="method" value="EM"/>
    <property type="resolution" value="3.04 A"/>
    <property type="chains" value="Y=1-127"/>
</dbReference>
<dbReference type="PDB" id="7RR5">
    <property type="method" value="EM"/>
    <property type="resolution" value="3.23 A"/>
    <property type="chains" value="LY=1-127"/>
</dbReference>
<dbReference type="PDB" id="7TOO">
    <property type="method" value="EM"/>
    <property type="resolution" value="2.70 A"/>
    <property type="chains" value="AL26=1-127"/>
</dbReference>
<dbReference type="PDB" id="7TOP">
    <property type="method" value="EM"/>
    <property type="resolution" value="2.40 A"/>
    <property type="chains" value="AL26=1-127"/>
</dbReference>
<dbReference type="PDB" id="7U0H">
    <property type="method" value="EM"/>
    <property type="resolution" value="2.76 A"/>
    <property type="chains" value="Y=1-127"/>
</dbReference>
<dbReference type="PDB" id="7UG6">
    <property type="method" value="EM"/>
    <property type="resolution" value="2.90 A"/>
    <property type="chains" value="Y=1-127"/>
</dbReference>
<dbReference type="PDB" id="7UOO">
    <property type="method" value="EM"/>
    <property type="resolution" value="2.34 A"/>
    <property type="chains" value="Y=1-127"/>
</dbReference>
<dbReference type="PDB" id="7UQB">
    <property type="method" value="EM"/>
    <property type="resolution" value="2.43 A"/>
    <property type="chains" value="Y=1-127"/>
</dbReference>
<dbReference type="PDB" id="7UQZ">
    <property type="method" value="EM"/>
    <property type="resolution" value="2.44 A"/>
    <property type="chains" value="Y=1-127"/>
</dbReference>
<dbReference type="PDB" id="7V08">
    <property type="method" value="EM"/>
    <property type="resolution" value="2.36 A"/>
    <property type="chains" value="Y=1-127"/>
</dbReference>
<dbReference type="PDB" id="7Z34">
    <property type="method" value="EM"/>
    <property type="resolution" value="3.80 A"/>
    <property type="chains" value="Y=1-127"/>
</dbReference>
<dbReference type="PDB" id="7ZPQ">
    <property type="method" value="EM"/>
    <property type="resolution" value="3.47 A"/>
    <property type="chains" value="BX=2-126"/>
</dbReference>
<dbReference type="PDB" id="7ZRS">
    <property type="method" value="EM"/>
    <property type="resolution" value="4.80 A"/>
    <property type="chains" value="BX=2-126"/>
</dbReference>
<dbReference type="PDB" id="7ZS5">
    <property type="method" value="EM"/>
    <property type="resolution" value="3.20 A"/>
    <property type="chains" value="BZ=1-127"/>
</dbReference>
<dbReference type="PDB" id="7ZUW">
    <property type="method" value="EM"/>
    <property type="resolution" value="4.30 A"/>
    <property type="chains" value="BX=2-126"/>
</dbReference>
<dbReference type="PDB" id="7ZUX">
    <property type="method" value="EM"/>
    <property type="resolution" value="2.50 A"/>
    <property type="chains" value="EX=2-126"/>
</dbReference>
<dbReference type="PDB" id="7ZW0">
    <property type="method" value="EM"/>
    <property type="resolution" value="2.40 A"/>
    <property type="chains" value="Lb=1-127"/>
</dbReference>
<dbReference type="PDB" id="8AAF">
    <property type="method" value="EM"/>
    <property type="resolution" value="2.50 A"/>
    <property type="chains" value="L=1-127"/>
</dbReference>
<dbReference type="PDB" id="8AGT">
    <property type="method" value="EM"/>
    <property type="resolution" value="2.60 A"/>
    <property type="chains" value="L=1-127"/>
</dbReference>
<dbReference type="PDB" id="8AGU">
    <property type="method" value="EM"/>
    <property type="resolution" value="2.70 A"/>
    <property type="chains" value="L=1-127"/>
</dbReference>
<dbReference type="PDB" id="8AGV">
    <property type="method" value="EM"/>
    <property type="resolution" value="2.60 A"/>
    <property type="chains" value="L=1-127"/>
</dbReference>
<dbReference type="PDB" id="8AGW">
    <property type="method" value="EM"/>
    <property type="resolution" value="2.60 A"/>
    <property type="chains" value="L=1-127"/>
</dbReference>
<dbReference type="PDB" id="8AGX">
    <property type="method" value="EM"/>
    <property type="resolution" value="2.40 A"/>
    <property type="chains" value="L=1-127"/>
</dbReference>
<dbReference type="PDB" id="8AGZ">
    <property type="method" value="EM"/>
    <property type="resolution" value="2.60 A"/>
    <property type="chains" value="L=1-127"/>
</dbReference>
<dbReference type="PDB" id="8BIP">
    <property type="method" value="EM"/>
    <property type="resolution" value="3.10 A"/>
    <property type="chains" value="LY=2-126"/>
</dbReference>
<dbReference type="PDB" id="8BJQ">
    <property type="method" value="EM"/>
    <property type="resolution" value="3.80 A"/>
    <property type="chains" value="LY=2-126"/>
</dbReference>
<dbReference type="PDB" id="8BN3">
    <property type="method" value="EM"/>
    <property type="resolution" value="2.40 A"/>
    <property type="chains" value="N6=2-127"/>
</dbReference>
<dbReference type="PDB" id="8BQD">
    <property type="method" value="EM"/>
    <property type="resolution" value="3.90 A"/>
    <property type="chains" value="AK=2-126"/>
</dbReference>
<dbReference type="PDB" id="8BQX">
    <property type="method" value="EM"/>
    <property type="resolution" value="3.80 A"/>
    <property type="chains" value="AK=2-126"/>
</dbReference>
<dbReference type="PDB" id="8CCS">
    <property type="method" value="EM"/>
    <property type="resolution" value="1.97 A"/>
    <property type="chains" value="K=1-127"/>
</dbReference>
<dbReference type="PDB" id="8CDL">
    <property type="method" value="EM"/>
    <property type="resolution" value="2.72 A"/>
    <property type="chains" value="K=1-127"/>
</dbReference>
<dbReference type="PDB" id="8CDR">
    <property type="method" value="EM"/>
    <property type="resolution" value="2.04 A"/>
    <property type="chains" value="K=1-127"/>
</dbReference>
<dbReference type="PDB" id="8CEH">
    <property type="method" value="EM"/>
    <property type="resolution" value="2.05 A"/>
    <property type="chains" value="K=1-127"/>
</dbReference>
<dbReference type="PDB" id="8CF5">
    <property type="method" value="EM"/>
    <property type="resolution" value="2.71 A"/>
    <property type="chains" value="K=1-127"/>
</dbReference>
<dbReference type="PDB" id="8CG8">
    <property type="method" value="EM"/>
    <property type="resolution" value="2.57 A"/>
    <property type="chains" value="K=1-127"/>
</dbReference>
<dbReference type="PDB" id="8CGN">
    <property type="method" value="EM"/>
    <property type="resolution" value="2.28 A"/>
    <property type="chains" value="K=1-127"/>
</dbReference>
<dbReference type="PDB" id="8CIV">
    <property type="method" value="EM"/>
    <property type="resolution" value="2.47 A"/>
    <property type="chains" value="K=1-127"/>
</dbReference>
<dbReference type="PDB" id="8CKU">
    <property type="method" value="EM"/>
    <property type="resolution" value="3.11 A"/>
    <property type="chains" value="K=1-127"/>
</dbReference>
<dbReference type="PDB" id="8CMJ">
    <property type="method" value="EM"/>
    <property type="resolution" value="3.79 A"/>
    <property type="chains" value="K=1-127"/>
</dbReference>
<dbReference type="PDB" id="8EUB">
    <property type="method" value="EM"/>
    <property type="resolution" value="2.52 A"/>
    <property type="chains" value="AY=1-127"/>
</dbReference>
<dbReference type="PDB" id="8EVP">
    <property type="method" value="EM"/>
    <property type="resolution" value="2.38 A"/>
    <property type="chains" value="AY=1-127"/>
</dbReference>
<dbReference type="PDB" id="8EVQ">
    <property type="method" value="EM"/>
    <property type="resolution" value="2.72 A"/>
    <property type="chains" value="AY=1-127"/>
</dbReference>
<dbReference type="PDB" id="8EVR">
    <property type="method" value="EM"/>
    <property type="resolution" value="2.87 A"/>
    <property type="chains" value="AY=1-127"/>
</dbReference>
<dbReference type="PDB" id="8EVS">
    <property type="method" value="EM"/>
    <property type="resolution" value="2.62 A"/>
    <property type="chains" value="AY=1-127"/>
</dbReference>
<dbReference type="PDB" id="8EVT">
    <property type="method" value="EM"/>
    <property type="resolution" value="2.20 A"/>
    <property type="chains" value="AY=1-127"/>
</dbReference>
<dbReference type="PDB" id="8EWB">
    <property type="method" value="EM"/>
    <property type="resolution" value="2.87 A"/>
    <property type="chains" value="AY=1-127"/>
</dbReference>
<dbReference type="PDB" id="8EWC">
    <property type="method" value="EM"/>
    <property type="resolution" value="2.45 A"/>
    <property type="chains" value="AY=1-127"/>
</dbReference>
<dbReference type="PDB" id="8HFR">
    <property type="method" value="EM"/>
    <property type="resolution" value="2.64 A"/>
    <property type="chains" value="YU=1-127"/>
</dbReference>
<dbReference type="PDB" id="8K2D">
    <property type="method" value="EM"/>
    <property type="resolution" value="3.20 A"/>
    <property type="chains" value="LY=1-127"/>
</dbReference>
<dbReference type="PDB" id="8K82">
    <property type="method" value="EM"/>
    <property type="resolution" value="3.00 A"/>
    <property type="chains" value="LY=1-127"/>
</dbReference>
<dbReference type="PDB" id="8P4V">
    <property type="method" value="X-ray"/>
    <property type="resolution" value="3.16 A"/>
    <property type="chains" value="9/DA=1-127"/>
</dbReference>
<dbReference type="PDB" id="8P8M">
    <property type="method" value="EM"/>
    <property type="resolution" value="2.66 A"/>
    <property type="chains" value="QY=1-127"/>
</dbReference>
<dbReference type="PDB" id="8P8N">
    <property type="method" value="EM"/>
    <property type="resolution" value="2.15 A"/>
    <property type="chains" value="QY=1-127"/>
</dbReference>
<dbReference type="PDB" id="8P8U">
    <property type="method" value="EM"/>
    <property type="resolution" value="2.23 A"/>
    <property type="chains" value="QY=1-127"/>
</dbReference>
<dbReference type="PDB" id="8P9A">
    <property type="method" value="X-ray"/>
    <property type="resolution" value="2.90 A"/>
    <property type="chains" value="9/DA=1-127"/>
</dbReference>
<dbReference type="PDB" id="8PFR">
    <property type="method" value="EM"/>
    <property type="resolution" value="2.15 A"/>
    <property type="chains" value="QY=1-127"/>
</dbReference>
<dbReference type="PDB" id="8T2X">
    <property type="method" value="EM"/>
    <property type="resolution" value="2.46 A"/>
    <property type="chains" value="AY=1-127"/>
</dbReference>
<dbReference type="PDB" id="8T2Y">
    <property type="method" value="EM"/>
    <property type="resolution" value="2.20 A"/>
    <property type="chains" value="AY=1-127"/>
</dbReference>
<dbReference type="PDB" id="8T2Z">
    <property type="method" value="EM"/>
    <property type="resolution" value="2.40 A"/>
    <property type="chains" value="AY=1-127"/>
</dbReference>
<dbReference type="PDB" id="8T30">
    <property type="method" value="EM"/>
    <property type="resolution" value="2.88 A"/>
    <property type="chains" value="AY=1-127"/>
</dbReference>
<dbReference type="PDB" id="8T3A">
    <property type="method" value="EM"/>
    <property type="resolution" value="2.86 A"/>
    <property type="chains" value="AY=1-127"/>
</dbReference>
<dbReference type="PDB" id="8T3B">
    <property type="method" value="EM"/>
    <property type="resolution" value="3.08 A"/>
    <property type="chains" value="AY=1-127"/>
</dbReference>
<dbReference type="PDB" id="8T3C">
    <property type="method" value="EM"/>
    <property type="resolution" value="3.86 A"/>
    <property type="chains" value="AY=1-127"/>
</dbReference>
<dbReference type="PDB" id="8T3D">
    <property type="method" value="EM"/>
    <property type="resolution" value="2.95 A"/>
    <property type="chains" value="AY=1-127"/>
</dbReference>
<dbReference type="PDB" id="8T3E">
    <property type="method" value="EM"/>
    <property type="resolution" value="3.04 A"/>
    <property type="chains" value="AY=1-127"/>
</dbReference>
<dbReference type="PDB" id="8T3F">
    <property type="method" value="EM"/>
    <property type="resolution" value="3.09 A"/>
    <property type="chains" value="AY=1-127"/>
</dbReference>
<dbReference type="PDB" id="8UT0">
    <property type="method" value="EM"/>
    <property type="resolution" value="3.22 A"/>
    <property type="chains" value="La=2-126"/>
</dbReference>
<dbReference type="PDB" id="8UTI">
    <property type="method" value="EM"/>
    <property type="resolution" value="3.13 A"/>
    <property type="chains" value="La=2-126"/>
</dbReference>
<dbReference type="PDB" id="8V83">
    <property type="method" value="EM"/>
    <property type="resolution" value="2.53 A"/>
    <property type="chains" value="Y=1-127"/>
</dbReference>
<dbReference type="PDB" id="8V84">
    <property type="method" value="EM"/>
    <property type="resolution" value="2.70 A"/>
    <property type="chains" value="Y=1-127"/>
</dbReference>
<dbReference type="PDB" id="8V87">
    <property type="method" value="EM"/>
    <property type="resolution" value="2.66 A"/>
    <property type="chains" value="Y=1-127"/>
</dbReference>
<dbReference type="PDB" id="8XU8">
    <property type="method" value="EM"/>
    <property type="resolution" value="3.40 A"/>
    <property type="chains" value="a=2-126"/>
</dbReference>
<dbReference type="PDB" id="8Y0U">
    <property type="method" value="EM"/>
    <property type="resolution" value="3.59 A"/>
    <property type="chains" value="LY=1-127"/>
</dbReference>
<dbReference type="PDB" id="8YLD">
    <property type="method" value="EM"/>
    <property type="resolution" value="3.90 A"/>
    <property type="chains" value="a=2-126"/>
</dbReference>
<dbReference type="PDB" id="8YLR">
    <property type="method" value="EM"/>
    <property type="resolution" value="3.90 A"/>
    <property type="chains" value="a=2-126"/>
</dbReference>
<dbReference type="PDB" id="8Z70">
    <property type="method" value="EM"/>
    <property type="resolution" value="3.20 A"/>
    <property type="chains" value="a=2-126"/>
</dbReference>
<dbReference type="PDB" id="8Z71">
    <property type="method" value="EM"/>
    <property type="resolution" value="3.60 A"/>
    <property type="chains" value="a=2-126"/>
</dbReference>
<dbReference type="PDB" id="9F9S">
    <property type="method" value="EM"/>
    <property type="resolution" value="2.90 A"/>
    <property type="chains" value="Ls/Ms=1-127"/>
</dbReference>
<dbReference type="PDBsum" id="2WW9"/>
<dbReference type="PDBsum" id="2WWA"/>
<dbReference type="PDBsum" id="2WWB"/>
<dbReference type="PDBsum" id="3J6X"/>
<dbReference type="PDBsum" id="3J6Y"/>
<dbReference type="PDBsum" id="3J77"/>
<dbReference type="PDBsum" id="3J78"/>
<dbReference type="PDBsum" id="3JCT"/>
<dbReference type="PDBsum" id="4U3M"/>
<dbReference type="PDBsum" id="4U3N"/>
<dbReference type="PDBsum" id="4U3U"/>
<dbReference type="PDBsum" id="4U4N"/>
<dbReference type="PDBsum" id="4U4O"/>
<dbReference type="PDBsum" id="4U4Q"/>
<dbReference type="PDBsum" id="4U4R"/>
<dbReference type="PDBsum" id="4U4U"/>
<dbReference type="PDBsum" id="4U4Y"/>
<dbReference type="PDBsum" id="4U4Z"/>
<dbReference type="PDBsum" id="4U50"/>
<dbReference type="PDBsum" id="4U51"/>
<dbReference type="PDBsum" id="4U52"/>
<dbReference type="PDBsum" id="4U53"/>
<dbReference type="PDBsum" id="4U55"/>
<dbReference type="PDBsum" id="4U56"/>
<dbReference type="PDBsum" id="4U6F"/>
<dbReference type="PDBsum" id="4V4B"/>
<dbReference type="PDBsum" id="4V5Z"/>
<dbReference type="PDBsum" id="4V6I"/>
<dbReference type="PDBsum" id="4V7F"/>
<dbReference type="PDBsum" id="4V7R"/>
<dbReference type="PDBsum" id="4V88"/>
<dbReference type="PDBsum" id="4V8T"/>
<dbReference type="PDBsum" id="4V8Y"/>
<dbReference type="PDBsum" id="4V8Z"/>
<dbReference type="PDBsum" id="4V91"/>
<dbReference type="PDBsum" id="5APN"/>
<dbReference type="PDBsum" id="5APO"/>
<dbReference type="PDBsum" id="5DAT"/>
<dbReference type="PDBsum" id="5DC3"/>
<dbReference type="PDBsum" id="5DGE"/>
<dbReference type="PDBsum" id="5DGF"/>
<dbReference type="PDBsum" id="5DGV"/>
<dbReference type="PDBsum" id="5FCI"/>
<dbReference type="PDBsum" id="5FCJ"/>
<dbReference type="PDBsum" id="5GAK"/>
<dbReference type="PDBsum" id="5H4P"/>
<dbReference type="PDBsum" id="5I4L"/>
<dbReference type="PDBsum" id="5JCS"/>
<dbReference type="PDBsum" id="5JUO"/>
<dbReference type="PDBsum" id="5JUP"/>
<dbReference type="PDBsum" id="5JUS"/>
<dbReference type="PDBsum" id="5JUT"/>
<dbReference type="PDBsum" id="5JUU"/>
<dbReference type="PDBsum" id="5LYB"/>
<dbReference type="PDBsum" id="5M1J"/>
<dbReference type="PDBsum" id="5MC6"/>
<dbReference type="PDBsum" id="5MEI"/>
<dbReference type="PDBsum" id="5NDG"/>
<dbReference type="PDBsum" id="5NDV"/>
<dbReference type="PDBsum" id="5NDW"/>
<dbReference type="PDBsum" id="5OBM"/>
<dbReference type="PDBsum" id="5ON6"/>
<dbReference type="PDBsum" id="5T62"/>
<dbReference type="PDBsum" id="5T6R"/>
<dbReference type="PDBsum" id="5TBW"/>
<dbReference type="PDBsum" id="5TGA"/>
<dbReference type="PDBsum" id="5TGM"/>
<dbReference type="PDBsum" id="5Z3G"/>
<dbReference type="PDBsum" id="6C0F"/>
<dbReference type="PDBsum" id="6CB1"/>
<dbReference type="PDBsum" id="6ELZ"/>
<dbReference type="PDBsum" id="6EM1"/>
<dbReference type="PDBsum" id="6EM3"/>
<dbReference type="PDBsum" id="6EM4"/>
<dbReference type="PDBsum" id="6EM5"/>
<dbReference type="PDBsum" id="6FT6"/>
<dbReference type="PDBsum" id="6GQ1"/>
<dbReference type="PDBsum" id="6GQB"/>
<dbReference type="PDBsum" id="6GQV"/>
<dbReference type="PDBsum" id="6HD7"/>
<dbReference type="PDBsum" id="6HHQ"/>
<dbReference type="PDBsum" id="6I7O"/>
<dbReference type="PDBsum" id="6M62"/>
<dbReference type="PDBsum" id="6N8J"/>
<dbReference type="PDBsum" id="6N8K"/>
<dbReference type="PDBsum" id="6N8L"/>
<dbReference type="PDBsum" id="6N8M"/>
<dbReference type="PDBsum" id="6N8N"/>
<dbReference type="PDBsum" id="6N8O"/>
<dbReference type="PDBsum" id="6OIG"/>
<dbReference type="PDBsum" id="6Q8Y"/>
<dbReference type="PDBsum" id="6QIK"/>
<dbReference type="PDBsum" id="6QT0"/>
<dbReference type="PDBsum" id="6QTZ"/>
<dbReference type="PDBsum" id="6R84"/>
<dbReference type="PDBsum" id="6R86"/>
<dbReference type="PDBsum" id="6R87"/>
<dbReference type="PDBsum" id="6RI5"/>
<dbReference type="PDBsum" id="6RZZ"/>
<dbReference type="PDBsum" id="6S05"/>
<dbReference type="PDBsum" id="6S47"/>
<dbReference type="PDBsum" id="6SNT"/>
<dbReference type="PDBsum" id="6SV4"/>
<dbReference type="PDBsum" id="6T4Q"/>
<dbReference type="PDBsum" id="6T7I"/>
<dbReference type="PDBsum" id="6T7T"/>
<dbReference type="PDBsum" id="6T83"/>
<dbReference type="PDBsum" id="6TB3"/>
<dbReference type="PDBsum" id="6TNU"/>
<dbReference type="PDBsum" id="6WOO"/>
<dbReference type="PDBsum" id="6XIQ"/>
<dbReference type="PDBsum" id="6XIR"/>
<dbReference type="PDBsum" id="6YLG"/>
<dbReference type="PDBsum" id="6YLH"/>
<dbReference type="PDBsum" id="6YLX"/>
<dbReference type="PDBsum" id="6YLY"/>
<dbReference type="PDBsum" id="6Z6J"/>
<dbReference type="PDBsum" id="6Z6K"/>
<dbReference type="PDBsum" id="7AZY"/>
<dbReference type="PDBsum" id="7B7D"/>
<dbReference type="PDBsum" id="7BT6"/>
<dbReference type="PDBsum" id="7BTB"/>
<dbReference type="PDBsum" id="7MPI"/>
<dbReference type="PDBsum" id="7MPJ"/>
<dbReference type="PDBsum" id="7N8B"/>
<dbReference type="PDBsum" id="7NAC"/>
<dbReference type="PDBsum" id="7NRC"/>
<dbReference type="PDBsum" id="7NRD"/>
<dbReference type="PDBsum" id="7OF1"/>
<dbReference type="PDBsum" id="7OH3"/>
<dbReference type="PDBsum" id="7OHP"/>
<dbReference type="PDBsum" id="7OHQ"/>
<dbReference type="PDBsum" id="7OHR"/>
<dbReference type="PDBsum" id="7OHS"/>
<dbReference type="PDBsum" id="7OHU"/>
<dbReference type="PDBsum" id="7OHV"/>
<dbReference type="PDBsum" id="7OHW"/>
<dbReference type="PDBsum" id="7OHX"/>
<dbReference type="PDBsum" id="7OHY"/>
<dbReference type="PDBsum" id="7OSA"/>
<dbReference type="PDBsum" id="7OSM"/>
<dbReference type="PDBsum" id="7R7A"/>
<dbReference type="PDBsum" id="7RR5"/>
<dbReference type="PDBsum" id="7TOO"/>
<dbReference type="PDBsum" id="7TOP"/>
<dbReference type="PDBsum" id="7U0H"/>
<dbReference type="PDBsum" id="7UG6"/>
<dbReference type="PDBsum" id="7UOO"/>
<dbReference type="PDBsum" id="7UQB"/>
<dbReference type="PDBsum" id="7UQZ"/>
<dbReference type="PDBsum" id="7V08"/>
<dbReference type="PDBsum" id="7Z34"/>
<dbReference type="PDBsum" id="7ZPQ"/>
<dbReference type="PDBsum" id="7ZRS"/>
<dbReference type="PDBsum" id="7ZS5"/>
<dbReference type="PDBsum" id="7ZUW"/>
<dbReference type="PDBsum" id="7ZUX"/>
<dbReference type="PDBsum" id="7ZW0"/>
<dbReference type="PDBsum" id="8AAF"/>
<dbReference type="PDBsum" id="8AGT"/>
<dbReference type="PDBsum" id="8AGU"/>
<dbReference type="PDBsum" id="8AGV"/>
<dbReference type="PDBsum" id="8AGW"/>
<dbReference type="PDBsum" id="8AGX"/>
<dbReference type="PDBsum" id="8AGZ"/>
<dbReference type="PDBsum" id="8BIP"/>
<dbReference type="PDBsum" id="8BJQ"/>
<dbReference type="PDBsum" id="8BN3"/>
<dbReference type="PDBsum" id="8BQD"/>
<dbReference type="PDBsum" id="8BQX"/>
<dbReference type="PDBsum" id="8CCS"/>
<dbReference type="PDBsum" id="8CDL"/>
<dbReference type="PDBsum" id="8CDR"/>
<dbReference type="PDBsum" id="8CEH"/>
<dbReference type="PDBsum" id="8CF5"/>
<dbReference type="PDBsum" id="8CG8"/>
<dbReference type="PDBsum" id="8CGN"/>
<dbReference type="PDBsum" id="8CIV"/>
<dbReference type="PDBsum" id="8CKU"/>
<dbReference type="PDBsum" id="8CMJ"/>
<dbReference type="PDBsum" id="8EUB"/>
<dbReference type="PDBsum" id="8EVP"/>
<dbReference type="PDBsum" id="8EVQ"/>
<dbReference type="PDBsum" id="8EVR"/>
<dbReference type="PDBsum" id="8EVS"/>
<dbReference type="PDBsum" id="8EVT"/>
<dbReference type="PDBsum" id="8EWB"/>
<dbReference type="PDBsum" id="8EWC"/>
<dbReference type="PDBsum" id="8HFR"/>
<dbReference type="PDBsum" id="8K2D"/>
<dbReference type="PDBsum" id="8K82"/>
<dbReference type="PDBsum" id="8P4V"/>
<dbReference type="PDBsum" id="8P8M"/>
<dbReference type="PDBsum" id="8P8N"/>
<dbReference type="PDBsum" id="8P8U"/>
<dbReference type="PDBsum" id="8P9A"/>
<dbReference type="PDBsum" id="8PFR"/>
<dbReference type="PDBsum" id="8T2X"/>
<dbReference type="PDBsum" id="8T2Y"/>
<dbReference type="PDBsum" id="8T2Z"/>
<dbReference type="PDBsum" id="8T30"/>
<dbReference type="PDBsum" id="8T3A"/>
<dbReference type="PDBsum" id="8T3B"/>
<dbReference type="PDBsum" id="8T3C"/>
<dbReference type="PDBsum" id="8T3D"/>
<dbReference type="PDBsum" id="8T3E"/>
<dbReference type="PDBsum" id="8T3F"/>
<dbReference type="PDBsum" id="8UT0"/>
<dbReference type="PDBsum" id="8UTI"/>
<dbReference type="PDBsum" id="8V83"/>
<dbReference type="PDBsum" id="8V84"/>
<dbReference type="PDBsum" id="8V87"/>
<dbReference type="PDBsum" id="8XU8"/>
<dbReference type="PDBsum" id="8Y0U"/>
<dbReference type="PDBsum" id="8YLD"/>
<dbReference type="PDBsum" id="8YLR"/>
<dbReference type="PDBsum" id="8Z70"/>
<dbReference type="PDBsum" id="8Z71"/>
<dbReference type="PDBsum" id="9F9S"/>
<dbReference type="EMDB" id="EMD-0047"/>
<dbReference type="EMDB" id="EMD-0048"/>
<dbReference type="EMDB" id="EMD-0049"/>
<dbReference type="EMDB" id="EMD-0202"/>
<dbReference type="EMDB" id="EMD-0369"/>
<dbReference type="EMDB" id="EMD-0370"/>
<dbReference type="EMDB" id="EMD-0371"/>
<dbReference type="EMDB" id="EMD-0372"/>
<dbReference type="EMDB" id="EMD-0373"/>
<dbReference type="EMDB" id="EMD-0374"/>
<dbReference type="EMDB" id="EMD-10068"/>
<dbReference type="EMDB" id="EMD-10071"/>
<dbReference type="EMDB" id="EMD-10098"/>
<dbReference type="EMDB" id="EMD-10262"/>
<dbReference type="EMDB" id="EMD-10315"/>
<dbReference type="EMDB" id="EMD-10377"/>
<dbReference type="EMDB" id="EMD-10396"/>
<dbReference type="EMDB" id="EMD-10397"/>
<dbReference type="EMDB" id="EMD-10398"/>
<dbReference type="EMDB" id="EMD-10431"/>
<dbReference type="EMDB" id="EMD-10537"/>
<dbReference type="EMDB" id="EMD-10838"/>
<dbReference type="EMDB" id="EMD-10839"/>
<dbReference type="EMDB" id="EMD-10841"/>
<dbReference type="EMDB" id="EMD-10842"/>
<dbReference type="EMDB" id="EMD-11096"/>
<dbReference type="EMDB" id="EMD-11097"/>
<dbReference type="EMDB" id="EMD-11951"/>
<dbReference type="EMDB" id="EMD-12081"/>
<dbReference type="EMDB" id="EMD-12534"/>
<dbReference type="EMDB" id="EMD-12535"/>
<dbReference type="EMDB" id="EMD-12866"/>
<dbReference type="EMDB" id="EMD-12892"/>
<dbReference type="EMDB" id="EMD-12904"/>
<dbReference type="EMDB" id="EMD-12905"/>
<dbReference type="EMDB" id="EMD-12906"/>
<dbReference type="EMDB" id="EMD-12907"/>
<dbReference type="EMDB" id="EMD-12909"/>
<dbReference type="EMDB" id="EMD-12910"/>
<dbReference type="EMDB" id="EMD-12911"/>
<dbReference type="EMDB" id="EMD-12912"/>
<dbReference type="EMDB" id="EMD-12913"/>
<dbReference type="EMDB" id="EMD-14471"/>
<dbReference type="EMDB" id="EMD-14861"/>
<dbReference type="EMDB" id="EMD-14921"/>
<dbReference type="EMDB" id="EMD-14926"/>
<dbReference type="EMDB" id="EMD-14978"/>
<dbReference type="EMDB" id="EMD-14979"/>
<dbReference type="EMDB" id="EMD-14990"/>
<dbReference type="EMDB" id="EMD-15296"/>
<dbReference type="EMDB" id="EMD-15423"/>
<dbReference type="EMDB" id="EMD-15424"/>
<dbReference type="EMDB" id="EMD-15425"/>
<dbReference type="EMDB" id="EMD-15426"/>
<dbReference type="EMDB" id="EMD-15427"/>
<dbReference type="EMDB" id="EMD-15428"/>
<dbReference type="EMDB" id="EMD-16086"/>
<dbReference type="EMDB" id="EMD-16090"/>
<dbReference type="EMDB" id="EMD-16127"/>
<dbReference type="EMDB" id="EMD-16182"/>
<dbReference type="EMDB" id="EMD-16191"/>
<dbReference type="EMDB" id="EMD-16563"/>
<dbReference type="EMDB" id="EMD-16591"/>
<dbReference type="EMDB" id="EMD-16594"/>
<dbReference type="EMDB" id="EMD-16609"/>
<dbReference type="EMDB" id="EMD-16616"/>
<dbReference type="EMDB" id="EMD-16634"/>
<dbReference type="EMDB" id="EMD-16648"/>
<dbReference type="EMDB" id="EMD-16684"/>
<dbReference type="EMDB" id="EMD-16702"/>
<dbReference type="EMDB" id="EMD-16729"/>
<dbReference type="EMDB" id="EMD-17549"/>
<dbReference type="EMDB" id="EMD-17550"/>
<dbReference type="EMDB" id="EMD-17552"/>
<dbReference type="EMDB" id="EMD-17653"/>
<dbReference type="EMDB" id="EMD-20077"/>
<dbReference type="EMDB" id="EMD-21859"/>
<dbReference type="EMDB" id="EMD-22196"/>
<dbReference type="EMDB" id="EMD-22198"/>
<dbReference type="EMDB" id="EMD-23934"/>
<dbReference type="EMDB" id="EMD-23935"/>
<dbReference type="EMDB" id="EMD-24235"/>
<dbReference type="EMDB" id="EMD-24269"/>
<dbReference type="EMDB" id="EMD-24296"/>
<dbReference type="EMDB" id="EMD-24652"/>
<dbReference type="EMDB" id="EMD-26033"/>
<dbReference type="EMDB" id="EMD-26034"/>
<dbReference type="EMDB" id="EMD-26259"/>
<dbReference type="EMDB" id="EMD-26485"/>
<dbReference type="EMDB" id="EMD-26651"/>
<dbReference type="EMDB" id="EMD-26686"/>
<dbReference type="EMDB" id="EMD-26703"/>
<dbReference type="EMDB" id="EMD-26941"/>
<dbReference type="EMDB" id="EMD-28610"/>
<dbReference type="EMDB" id="EMD-28632"/>
<dbReference type="EMDB" id="EMD-28633"/>
<dbReference type="EMDB" id="EMD-28634"/>
<dbReference type="EMDB" id="EMD-28635"/>
<dbReference type="EMDB" id="EMD-28636"/>
<dbReference type="EMDB" id="EMD-28642"/>
<dbReference type="EMDB" id="EMD-28643"/>
<dbReference type="EMDB" id="EMD-30108"/>
<dbReference type="EMDB" id="EMD-30170"/>
<dbReference type="EMDB" id="EMD-30174"/>
<dbReference type="EMDB" id="EMD-3461"/>
<dbReference type="EMDB" id="EMD-34725"/>
<dbReference type="EMDB" id="EMD-36839"/>
<dbReference type="EMDB" id="EMD-36945"/>
<dbReference type="EMDB" id="EMD-38660"/>
<dbReference type="EMDB" id="EMD-40990"/>
<dbReference type="EMDB" id="EMD-40991"/>
<dbReference type="EMDB" id="EMD-40992"/>
<dbReference type="EMDB" id="EMD-40993"/>
<dbReference type="EMDB" id="EMD-40997"/>
<dbReference type="EMDB" id="EMD-40998"/>
<dbReference type="EMDB" id="EMD-40999"/>
<dbReference type="EMDB" id="EMD-41000"/>
<dbReference type="EMDB" id="EMD-41001"/>
<dbReference type="EMDB" id="EMD-41002"/>
<dbReference type="EMDB" id="EMD-4140"/>
<dbReference type="EMDB" id="EMD-42525"/>
<dbReference type="EMDB" id="EMD-42540"/>
<dbReference type="EMDB" id="EMD-43017"/>
<dbReference type="EMDB" id="EMD-4302"/>
<dbReference type="EMDB" id="EMD-43021"/>
<dbReference type="EMDB" id="EMD-43027"/>
<dbReference type="EMDB" id="EMD-4427"/>
<dbReference type="EMDB" id="EMD-4474"/>
<dbReference type="EMDB" id="EMD-4560"/>
<dbReference type="EMDB" id="EMD-4630"/>
<dbReference type="EMDB" id="EMD-4636"/>
<dbReference type="EMDB" id="EMD-4751"/>
<dbReference type="EMDB" id="EMD-4752"/>
<dbReference type="EMDB" id="EMD-4753"/>
<dbReference type="EMDB" id="EMD-4884"/>
<dbReference type="EMDB" id="EMD-50259"/>
<dbReference type="EMDB" id="EMD-6878"/>
<dbReference type="EMDB" id="EMD-7324"/>
<dbReference type="EMDB" id="EMD-7445"/>
<dbReference type="EMDB" id="EMD-8362"/>
<dbReference type="EMDB" id="EMD-8368"/>
<dbReference type="SMR" id="P05743"/>
<dbReference type="BioGRID" id="31607">
    <property type="interactions" value="700"/>
</dbReference>
<dbReference type="ComplexPortal" id="CPX-1601">
    <property type="entry name" value="60S cytosolic large ribosomal subunit"/>
</dbReference>
<dbReference type="DIP" id="DIP-5584N"/>
<dbReference type="FunCoup" id="P05743">
    <property type="interactions" value="1003"/>
</dbReference>
<dbReference type="IntAct" id="P05743">
    <property type="interactions" value="82"/>
</dbReference>
<dbReference type="MINT" id="P05743"/>
<dbReference type="STRING" id="4932.YLR344W"/>
<dbReference type="iPTMnet" id="P05743"/>
<dbReference type="PaxDb" id="4932-YLR344W"/>
<dbReference type="PeptideAtlas" id="P05743"/>
<dbReference type="TopDownProteomics" id="P05743"/>
<dbReference type="EnsemblFungi" id="YLR344W_mRNA">
    <property type="protein sequence ID" value="YLR344W"/>
    <property type="gene ID" value="YLR344W"/>
</dbReference>
<dbReference type="GeneID" id="851058"/>
<dbReference type="KEGG" id="sce:YLR344W"/>
<dbReference type="AGR" id="SGD:S000004336"/>
<dbReference type="SGD" id="S000004336">
    <property type="gene designation" value="RPL26A"/>
</dbReference>
<dbReference type="VEuPathDB" id="FungiDB:YLR344W"/>
<dbReference type="eggNOG" id="KOG3401">
    <property type="taxonomic scope" value="Eukaryota"/>
</dbReference>
<dbReference type="GeneTree" id="ENSGT00390000014165"/>
<dbReference type="HOGENOM" id="CLU_093240_0_1_1"/>
<dbReference type="InParanoid" id="P05743"/>
<dbReference type="OMA" id="RRDYKIC"/>
<dbReference type="OrthoDB" id="1688503at2759"/>
<dbReference type="BioCyc" id="YEAST:G3O-32420-MONOMER"/>
<dbReference type="Reactome" id="R-SCE-156827">
    <property type="pathway name" value="L13a-mediated translational silencing of Ceruloplasmin expression"/>
</dbReference>
<dbReference type="Reactome" id="R-SCE-1799339">
    <property type="pathway name" value="SRP-dependent cotranslational protein targeting to membrane"/>
</dbReference>
<dbReference type="Reactome" id="R-SCE-72689">
    <property type="pathway name" value="Formation of a pool of free 40S subunits"/>
</dbReference>
<dbReference type="Reactome" id="R-SCE-72706">
    <property type="pathway name" value="GTP hydrolysis and joining of the 60S ribosomal subunit"/>
</dbReference>
<dbReference type="Reactome" id="R-SCE-975956">
    <property type="pathway name" value="Nonsense Mediated Decay (NMD) independent of the Exon Junction Complex (EJC)"/>
</dbReference>
<dbReference type="Reactome" id="R-SCE-975957">
    <property type="pathway name" value="Nonsense Mediated Decay (NMD) enhanced by the Exon Junction Complex (EJC)"/>
</dbReference>
<dbReference type="BioGRID-ORCS" id="851058">
    <property type="hits" value="1 hit in 10 CRISPR screens"/>
</dbReference>
<dbReference type="CD-CODE" id="9B47C524">
    <property type="entry name" value="Peri-nucleolar condensate"/>
</dbReference>
<dbReference type="EvolutionaryTrace" id="P05743"/>
<dbReference type="PRO" id="PR:P05743"/>
<dbReference type="Proteomes" id="UP000002311">
    <property type="component" value="Chromosome XII"/>
</dbReference>
<dbReference type="RNAct" id="P05743">
    <property type="molecule type" value="protein"/>
</dbReference>
<dbReference type="GO" id="GO:0005829">
    <property type="term" value="C:cytosol"/>
    <property type="evidence" value="ECO:0000304"/>
    <property type="project" value="Reactome"/>
</dbReference>
<dbReference type="GO" id="GO:0022625">
    <property type="term" value="C:cytosolic large ribosomal subunit"/>
    <property type="evidence" value="ECO:0000314"/>
    <property type="project" value="SGD"/>
</dbReference>
<dbReference type="GO" id="GO:0003723">
    <property type="term" value="F:RNA binding"/>
    <property type="evidence" value="ECO:0000314"/>
    <property type="project" value="SGD"/>
</dbReference>
<dbReference type="GO" id="GO:0003735">
    <property type="term" value="F:structural constituent of ribosome"/>
    <property type="evidence" value="ECO:0000314"/>
    <property type="project" value="SGD"/>
</dbReference>
<dbReference type="GO" id="GO:0002181">
    <property type="term" value="P:cytoplasmic translation"/>
    <property type="evidence" value="ECO:0000314"/>
    <property type="project" value="SGD"/>
</dbReference>
<dbReference type="GO" id="GO:0042273">
    <property type="term" value="P:ribosomal large subunit biogenesis"/>
    <property type="evidence" value="ECO:0000318"/>
    <property type="project" value="GO_Central"/>
</dbReference>
<dbReference type="CDD" id="cd06089">
    <property type="entry name" value="KOW_RPL26"/>
    <property type="match status" value="1"/>
</dbReference>
<dbReference type="FunFam" id="2.30.30.30:FF:000009">
    <property type="entry name" value="60S ribosomal protein L26"/>
    <property type="match status" value="1"/>
</dbReference>
<dbReference type="Gene3D" id="2.30.30.30">
    <property type="match status" value="1"/>
</dbReference>
<dbReference type="InterPro" id="IPR005824">
    <property type="entry name" value="KOW"/>
</dbReference>
<dbReference type="InterPro" id="IPR014722">
    <property type="entry name" value="Rib_uL2_dom2"/>
</dbReference>
<dbReference type="InterPro" id="IPR005825">
    <property type="entry name" value="Ribosomal_uL24_CS"/>
</dbReference>
<dbReference type="InterPro" id="IPR005756">
    <property type="entry name" value="Ribosomal_uL24_euk/arc"/>
</dbReference>
<dbReference type="InterPro" id="IPR041988">
    <property type="entry name" value="Ribosomal_uL24_KOW"/>
</dbReference>
<dbReference type="InterPro" id="IPR008991">
    <property type="entry name" value="Translation_prot_SH3-like_sf"/>
</dbReference>
<dbReference type="NCBIfam" id="TIGR01080">
    <property type="entry name" value="rplX_A_E"/>
    <property type="match status" value="1"/>
</dbReference>
<dbReference type="PANTHER" id="PTHR11143">
    <property type="entry name" value="60S RIBOSOMAL PROTEIN L26 FAMILY MEMBER"/>
    <property type="match status" value="1"/>
</dbReference>
<dbReference type="Pfam" id="PF00467">
    <property type="entry name" value="KOW"/>
    <property type="match status" value="1"/>
</dbReference>
<dbReference type="Pfam" id="PF16906">
    <property type="entry name" value="Ribosomal_L26"/>
    <property type="match status" value="1"/>
</dbReference>
<dbReference type="SUPFAM" id="SSF50104">
    <property type="entry name" value="Translation proteins SH3-like domain"/>
    <property type="match status" value="1"/>
</dbReference>
<dbReference type="PROSITE" id="PS01108">
    <property type="entry name" value="RIBOSOMAL_L24"/>
    <property type="match status" value="1"/>
</dbReference>
<feature type="initiator methionine" description="Removed" evidence="2">
    <location>
        <position position="1"/>
    </location>
</feature>
<feature type="chain" id="PRO_0000130801" description="Large ribosomal subunit protein uL24A">
    <location>
        <begin position="2"/>
        <end position="127"/>
    </location>
</feature>
<feature type="strand" evidence="9">
    <location>
        <begin position="6"/>
        <end position="8"/>
    </location>
</feature>
<feature type="helix" evidence="9">
    <location>
        <begin position="12"/>
        <end position="20"/>
    </location>
</feature>
<feature type="helix" evidence="9">
    <location>
        <begin position="24"/>
        <end position="30"/>
    </location>
</feature>
<feature type="strand" evidence="9">
    <location>
        <begin position="31"/>
        <end position="35"/>
    </location>
</feature>
<feature type="helix" evidence="9">
    <location>
        <begin position="37"/>
        <end position="43"/>
    </location>
</feature>
<feature type="strand" evidence="9">
    <location>
        <begin position="46"/>
        <end position="49"/>
    </location>
</feature>
<feature type="strand" evidence="9">
    <location>
        <begin position="55"/>
        <end position="58"/>
    </location>
</feature>
<feature type="strand" evidence="9">
    <location>
        <begin position="60"/>
        <end position="63"/>
    </location>
</feature>
<feature type="strand" evidence="9">
    <location>
        <begin position="67"/>
        <end position="74"/>
    </location>
</feature>
<feature type="turn" evidence="9">
    <location>
        <begin position="75"/>
        <end position="78"/>
    </location>
</feature>
<feature type="strand" evidence="9">
    <location>
        <begin position="79"/>
        <end position="88"/>
    </location>
</feature>
<feature type="strand" evidence="9">
    <location>
        <begin position="94"/>
        <end position="99"/>
    </location>
</feature>
<feature type="turn" evidence="9">
    <location>
        <begin position="101"/>
        <end position="103"/>
    </location>
</feature>
<feature type="strand" evidence="9">
    <location>
        <begin position="104"/>
        <end position="108"/>
    </location>
</feature>
<feature type="helix" evidence="9">
    <location>
        <begin position="113"/>
        <end position="121"/>
    </location>
</feature>
<organism>
    <name type="scientific">Saccharomyces cerevisiae (strain ATCC 204508 / S288c)</name>
    <name type="common">Baker's yeast</name>
    <dbReference type="NCBI Taxonomy" id="559292"/>
    <lineage>
        <taxon>Eukaryota</taxon>
        <taxon>Fungi</taxon>
        <taxon>Dikarya</taxon>
        <taxon>Ascomycota</taxon>
        <taxon>Saccharomycotina</taxon>
        <taxon>Saccharomycetes</taxon>
        <taxon>Saccharomycetales</taxon>
        <taxon>Saccharomycetaceae</taxon>
        <taxon>Saccharomyces</taxon>
    </lineage>
</organism>
<name>RL26A_YEAST</name>
<reference key="1">
    <citation type="journal article" date="1997" name="Nature">
        <title>The nucleotide sequence of Saccharomyces cerevisiae chromosome XII.</title>
        <authorList>
            <person name="Johnston M."/>
            <person name="Hillier L.W."/>
            <person name="Riles L."/>
            <person name="Albermann K."/>
            <person name="Andre B."/>
            <person name="Ansorge W."/>
            <person name="Benes V."/>
            <person name="Brueckner M."/>
            <person name="Delius H."/>
            <person name="Dubois E."/>
            <person name="Duesterhoeft A."/>
            <person name="Entian K.-D."/>
            <person name="Floeth M."/>
            <person name="Goffeau A."/>
            <person name="Hebling U."/>
            <person name="Heumann K."/>
            <person name="Heuss-Neitzel D."/>
            <person name="Hilbert H."/>
            <person name="Hilger F."/>
            <person name="Kleine K."/>
            <person name="Koetter P."/>
            <person name="Louis E.J."/>
            <person name="Messenguy F."/>
            <person name="Mewes H.-W."/>
            <person name="Miosga T."/>
            <person name="Moestl D."/>
            <person name="Mueller-Auer S."/>
            <person name="Nentwich U."/>
            <person name="Obermaier B."/>
            <person name="Piravandi E."/>
            <person name="Pohl T.M."/>
            <person name="Portetelle D."/>
            <person name="Purnelle B."/>
            <person name="Rechmann S."/>
            <person name="Rieger M."/>
            <person name="Rinke M."/>
            <person name="Rose M."/>
            <person name="Scharfe M."/>
            <person name="Scherens B."/>
            <person name="Scholler P."/>
            <person name="Schwager C."/>
            <person name="Schwarz S."/>
            <person name="Underwood A.P."/>
            <person name="Urrestarazu L.A."/>
            <person name="Vandenbol M."/>
            <person name="Verhasselt P."/>
            <person name="Vierendeels F."/>
            <person name="Voet M."/>
            <person name="Volckaert G."/>
            <person name="Voss H."/>
            <person name="Wambutt R."/>
            <person name="Wedler E."/>
            <person name="Wedler H."/>
            <person name="Zimmermann F.K."/>
            <person name="Zollner A."/>
            <person name="Hani J."/>
            <person name="Hoheisel J.D."/>
        </authorList>
    </citation>
    <scope>NUCLEOTIDE SEQUENCE [LARGE SCALE GENOMIC DNA]</scope>
    <source>
        <strain>ATCC 204508 / S288c</strain>
    </source>
</reference>
<reference key="2">
    <citation type="journal article" date="2014" name="G3 (Bethesda)">
        <title>The reference genome sequence of Saccharomyces cerevisiae: Then and now.</title>
        <authorList>
            <person name="Engel S.R."/>
            <person name="Dietrich F.S."/>
            <person name="Fisk D.G."/>
            <person name="Binkley G."/>
            <person name="Balakrishnan R."/>
            <person name="Costanzo M.C."/>
            <person name="Dwight S.S."/>
            <person name="Hitz B.C."/>
            <person name="Karra K."/>
            <person name="Nash R.S."/>
            <person name="Weng S."/>
            <person name="Wong E.D."/>
            <person name="Lloyd P."/>
            <person name="Skrzypek M.S."/>
            <person name="Miyasato S.R."/>
            <person name="Simison M."/>
            <person name="Cherry J.M."/>
        </authorList>
    </citation>
    <scope>GENOME REANNOTATION</scope>
    <source>
        <strain>ATCC 204508 / S288c</strain>
    </source>
</reference>
<reference key="3">
    <citation type="journal article" date="1984" name="Mol. Gen. Genet.">
        <title>Yeast ribosomal proteins. VIII. Isolation of two proteins and sequence characterization of twenty-four proteins from cytoplasmic ribosomes.</title>
        <authorList>
            <person name="Otaka E."/>
            <person name="Higo K."/>
            <person name="Itoh T."/>
        </authorList>
    </citation>
    <scope>PARTIAL PROTEIN SEQUENCE OF 2-41</scope>
    <scope>CLEAVAGE OF INITIATOR METHIONINE</scope>
</reference>
<reference key="4">
    <citation type="journal article" date="1998" name="Yeast">
        <title>The list of cytoplasmic ribosomal proteins of Saccharomyces cerevisiae.</title>
        <authorList>
            <person name="Planta R.J."/>
            <person name="Mager W.H."/>
        </authorList>
    </citation>
    <scope>NOMENCLATURE</scope>
    <scope>SUBUNIT</scope>
</reference>
<reference key="5">
    <citation type="journal article" date="2003" name="Nature">
        <title>Global analysis of protein localization in budding yeast.</title>
        <authorList>
            <person name="Huh W.-K."/>
            <person name="Falvo J.V."/>
            <person name="Gerke L.C."/>
            <person name="Carroll A.S."/>
            <person name="Howson R.W."/>
            <person name="Weissman J.S."/>
            <person name="O'Shea E.K."/>
        </authorList>
    </citation>
    <scope>SUBCELLULAR LOCATION [LARGE SCALE ANALYSIS]</scope>
</reference>
<reference key="6">
    <citation type="journal article" date="2014" name="Curr. Opin. Struct. Biol.">
        <title>A new system for naming ribosomal proteins.</title>
        <authorList>
            <person name="Ban N."/>
            <person name="Beckmann R."/>
            <person name="Cate J.H.D."/>
            <person name="Dinman J.D."/>
            <person name="Dragon F."/>
            <person name="Ellis S.R."/>
            <person name="Lafontaine D.L.J."/>
            <person name="Lindahl L."/>
            <person name="Liljas A."/>
            <person name="Lipton J.M."/>
            <person name="McAlear M.A."/>
            <person name="Moore P.B."/>
            <person name="Noller H.F."/>
            <person name="Ortega J."/>
            <person name="Panse V.G."/>
            <person name="Ramakrishnan V."/>
            <person name="Spahn C.M.T."/>
            <person name="Steitz T.A."/>
            <person name="Tchorzewski M."/>
            <person name="Tollervey D."/>
            <person name="Warren A.J."/>
            <person name="Williamson J.R."/>
            <person name="Wilson D."/>
            <person name="Yonath A."/>
            <person name="Yusupov M."/>
        </authorList>
    </citation>
    <scope>NOMENCLATURE</scope>
</reference>
<reference key="7">
    <citation type="journal article" date="2001" name="Cell">
        <title>Structure of the 80S ribosome from Saccharomyces cerevisiae -- tRNA-ribosome and subunit-subunit interactions.</title>
        <authorList>
            <person name="Spahn C.M.T."/>
            <person name="Beckmann R."/>
            <person name="Eswar N."/>
            <person name="Penczek P.A."/>
            <person name="Sali A."/>
            <person name="Blobel G."/>
            <person name="Frank J."/>
        </authorList>
    </citation>
    <scope>3D-STRUCTURE MODELING OF 9-123</scope>
    <scope>ELECTRON MICROSCOPY</scope>
</reference>
<reference key="8">
    <citation type="journal article" date="2004" name="EMBO J.">
        <title>Domain movements of elongation factor eEF2 and the eukaryotic 80S ribosome facilitate tRNA translocation.</title>
        <authorList>
            <person name="Spahn C.M.T."/>
            <person name="Gomez-Lorenzo M.G."/>
            <person name="Grassucci R.A."/>
            <person name="Joergensen R."/>
            <person name="Andersen G.R."/>
            <person name="Beckmann R."/>
            <person name="Penczek P.A."/>
            <person name="Ballesta J.P.G."/>
            <person name="Frank J."/>
        </authorList>
    </citation>
    <scope>3D-STRUCTURE MODELING</scope>
    <scope>ELECTRON MICROSCOPY</scope>
</reference>
<reference key="9">
    <citation type="journal article" date="2010" name="Science">
        <title>Crystal structure of the eukaryotic ribosome.</title>
        <authorList>
            <person name="Ben-Shem A."/>
            <person name="Jenner L."/>
            <person name="Yusupova G."/>
            <person name="Yusupov M."/>
        </authorList>
    </citation>
    <scope>X-RAY CRYSTALLOGRAPHY (4.0 ANGSTROMS) OF 80S RIBOSOME</scope>
</reference>
<reference key="10">
    <citation type="journal article" date="2011" name="Science">
        <title>The structure of the eukaryotic ribosome at 3.0 A resolution.</title>
        <authorList>
            <person name="Ben-Shem A."/>
            <person name="Garreau de Loubresse N."/>
            <person name="Melnikov S."/>
            <person name="Jenner L."/>
            <person name="Yusupova G."/>
            <person name="Yusupov M."/>
        </authorList>
    </citation>
    <scope>X-RAY CRYSTALLOGRAPHY (3.0 ANGSTROMS) OF 80S RIBOSOME</scope>
    <scope>SUBUNIT</scope>
    <scope>SUBCELLULAR LOCATION</scope>
</reference>
<evidence type="ECO:0000269" key="1">
    <source>
    </source>
</evidence>
<evidence type="ECO:0000269" key="2">
    <source>
    </source>
</evidence>
<evidence type="ECO:0000269" key="3">
    <source>
    </source>
</evidence>
<evidence type="ECO:0000303" key="4">
    <source>
    </source>
</evidence>
<evidence type="ECO:0000303" key="5">
    <source>
    </source>
</evidence>
<evidence type="ECO:0000305" key="6"/>
<evidence type="ECO:0000305" key="7">
    <source>
    </source>
</evidence>
<evidence type="ECO:0000305" key="8">
    <source>
    </source>
</evidence>
<evidence type="ECO:0007829" key="9">
    <source>
        <dbReference type="PDB" id="6EM3"/>
    </source>
</evidence>
<keyword id="KW-0002">3D-structure</keyword>
<keyword id="KW-0963">Cytoplasm</keyword>
<keyword id="KW-0903">Direct protein sequencing</keyword>
<keyword id="KW-1185">Reference proteome</keyword>
<keyword id="KW-0687">Ribonucleoprotein</keyword>
<keyword id="KW-0689">Ribosomal protein</keyword>
<sequence>MAKQSLDVSSDRRKARKAYFTAPSSQRRVLLSAPLSKELRAQYGIKALPIRRDDEVLVVRGSKKGQEGKISSVYRLKFAVQVDKVTKEKVNGASVPINLHPSKLVITKLHLDKDRKALIQRKGGKLE</sequence>
<gene>
    <name evidence="5" type="primary">RPL26A</name>
    <name type="synonym">RPL26</name>
    <name type="synonym">RPL33A</name>
    <name type="ordered locus">YLR344W</name>
    <name type="ORF">L8300.4</name>
</gene>
<accession>P05743</accession>
<accession>D6VYY3</accession>
<proteinExistence type="evidence at protein level"/>
<comment type="function">
    <text evidence="7">Component of the ribosome, a large ribonucleoprotein complex responsible for the synthesis of proteins in the cell. The small ribosomal subunit (SSU) binds messenger RNAs (mRNAs) and translates the encoded message by selecting cognate aminoacyl-transfer RNA (tRNA) molecules. The large subunit (LSU) contains the ribosomal catalytic site termed the peptidyl transferase center (PTC), which catalyzes the formation of peptide bonds, thereby polymerizing the amino acids delivered by tRNAs into a polypeptide chain. The nascent polypeptides leave the ribosome through a tunnel in the LSU and interact with protein factors that function in enzymatic processing, targeting, and the membrane insertion of nascent chains at the exit of the ribosomal tunnel.</text>
</comment>
<comment type="subunit">
    <text evidence="3 8">Component of the large ribosomal subunit (LSU). Mature yeast ribosomes consist of a small (40S) and a large (60S) subunit. The 40S small subunit contains 1 molecule of ribosomal RNA (18S rRNA) and 33 different proteins (encoded by 57 genes). The large 60S subunit contains 3 rRNA molecules (25S, 5.8S and 5S rRNA) and 46 different proteins (encoded by 81 genes) (PubMed:22096102, PubMed:9559554).</text>
</comment>
<comment type="subcellular location">
    <subcellularLocation>
        <location evidence="1 3">Cytoplasm</location>
    </subcellularLocation>
</comment>
<comment type="miscellaneous">
    <text evidence="6">There are 2 genes for uL24 in yeast.</text>
</comment>
<comment type="similarity">
    <text evidence="6">Belongs to the universal ribosomal protein uL24 family.</text>
</comment>
<protein>
    <recommendedName>
        <fullName evidence="4">Large ribosomal subunit protein uL24A</fullName>
    </recommendedName>
    <alternativeName>
        <fullName evidence="5">60S ribosomal protein L26-A</fullName>
    </alternativeName>
    <alternativeName>
        <fullName>L33</fullName>
    </alternativeName>
    <alternativeName>
        <fullName>YL33</fullName>
    </alternativeName>
</protein>